<proteinExistence type="inferred from homology"/>
<evidence type="ECO:0000255" key="1">
    <source>
        <dbReference type="HAMAP-Rule" id="MF_00491"/>
    </source>
</evidence>
<name>NU4C_CYCTA</name>
<dbReference type="EC" id="7.1.1.-" evidence="1"/>
<dbReference type="EMBL" id="AP009339">
    <property type="protein sequence ID" value="BAF65008.1"/>
    <property type="molecule type" value="Genomic_DNA"/>
</dbReference>
<dbReference type="RefSeq" id="YP_001312266.1">
    <property type="nucleotide sequence ID" value="NC_009618.1"/>
</dbReference>
<dbReference type="SMR" id="A6H5P2"/>
<dbReference type="GeneID" id="5309470"/>
<dbReference type="GO" id="GO:0009535">
    <property type="term" value="C:chloroplast thylakoid membrane"/>
    <property type="evidence" value="ECO:0007669"/>
    <property type="project" value="UniProtKB-SubCell"/>
</dbReference>
<dbReference type="GO" id="GO:0008137">
    <property type="term" value="F:NADH dehydrogenase (ubiquinone) activity"/>
    <property type="evidence" value="ECO:0007669"/>
    <property type="project" value="InterPro"/>
</dbReference>
<dbReference type="GO" id="GO:0048039">
    <property type="term" value="F:ubiquinone binding"/>
    <property type="evidence" value="ECO:0007669"/>
    <property type="project" value="TreeGrafter"/>
</dbReference>
<dbReference type="GO" id="GO:0042773">
    <property type="term" value="P:ATP synthesis coupled electron transport"/>
    <property type="evidence" value="ECO:0007669"/>
    <property type="project" value="InterPro"/>
</dbReference>
<dbReference type="GO" id="GO:0015990">
    <property type="term" value="P:electron transport coupled proton transport"/>
    <property type="evidence" value="ECO:0007669"/>
    <property type="project" value="TreeGrafter"/>
</dbReference>
<dbReference type="HAMAP" id="MF_00491">
    <property type="entry name" value="NDH1_NuoM"/>
    <property type="match status" value="1"/>
</dbReference>
<dbReference type="InterPro" id="IPR022997">
    <property type="entry name" value="NADH_Q_OxRdtase_chain4"/>
</dbReference>
<dbReference type="InterPro" id="IPR010227">
    <property type="entry name" value="NADH_Q_OxRdtase_chainM/4"/>
</dbReference>
<dbReference type="InterPro" id="IPR003918">
    <property type="entry name" value="NADH_UbQ_OxRdtase"/>
</dbReference>
<dbReference type="InterPro" id="IPR001750">
    <property type="entry name" value="ND/Mrp_TM"/>
</dbReference>
<dbReference type="NCBIfam" id="TIGR01972">
    <property type="entry name" value="NDH_I_M"/>
    <property type="match status" value="1"/>
</dbReference>
<dbReference type="PANTHER" id="PTHR43507:SF21">
    <property type="entry name" value="NAD(P)H-QUINONE OXIDOREDUCTASE CHAIN 4, CHLOROPLASTIC"/>
    <property type="match status" value="1"/>
</dbReference>
<dbReference type="PANTHER" id="PTHR43507">
    <property type="entry name" value="NADH-UBIQUINONE OXIDOREDUCTASE CHAIN 4"/>
    <property type="match status" value="1"/>
</dbReference>
<dbReference type="Pfam" id="PF00361">
    <property type="entry name" value="Proton_antipo_M"/>
    <property type="match status" value="1"/>
</dbReference>
<dbReference type="PRINTS" id="PR01437">
    <property type="entry name" value="NUOXDRDTASE4"/>
</dbReference>
<comment type="catalytic activity">
    <reaction evidence="1">
        <text>a plastoquinone + NADH + (n+1) H(+)(in) = a plastoquinol + NAD(+) + n H(+)(out)</text>
        <dbReference type="Rhea" id="RHEA:42608"/>
        <dbReference type="Rhea" id="RHEA-COMP:9561"/>
        <dbReference type="Rhea" id="RHEA-COMP:9562"/>
        <dbReference type="ChEBI" id="CHEBI:15378"/>
        <dbReference type="ChEBI" id="CHEBI:17757"/>
        <dbReference type="ChEBI" id="CHEBI:57540"/>
        <dbReference type="ChEBI" id="CHEBI:57945"/>
        <dbReference type="ChEBI" id="CHEBI:62192"/>
    </reaction>
</comment>
<comment type="catalytic activity">
    <reaction evidence="1">
        <text>a plastoquinone + NADPH + (n+1) H(+)(in) = a plastoquinol + NADP(+) + n H(+)(out)</text>
        <dbReference type="Rhea" id="RHEA:42612"/>
        <dbReference type="Rhea" id="RHEA-COMP:9561"/>
        <dbReference type="Rhea" id="RHEA-COMP:9562"/>
        <dbReference type="ChEBI" id="CHEBI:15378"/>
        <dbReference type="ChEBI" id="CHEBI:17757"/>
        <dbReference type="ChEBI" id="CHEBI:57783"/>
        <dbReference type="ChEBI" id="CHEBI:58349"/>
        <dbReference type="ChEBI" id="CHEBI:62192"/>
    </reaction>
</comment>
<comment type="subcellular location">
    <subcellularLocation>
        <location evidence="1">Plastid</location>
        <location evidence="1">Chloroplast thylakoid membrane</location>
        <topology evidence="1">Multi-pass membrane protein</topology>
    </subcellularLocation>
</comment>
<comment type="similarity">
    <text evidence="1">Belongs to the complex I subunit 4 family.</text>
</comment>
<feature type="chain" id="PRO_0000343282" description="NAD(P)H-quinone oxidoreductase chain 4, chloroplastic">
    <location>
        <begin position="1"/>
        <end position="500"/>
    </location>
</feature>
<feature type="transmembrane region" description="Helical" evidence="1">
    <location>
        <begin position="4"/>
        <end position="24"/>
    </location>
</feature>
<feature type="transmembrane region" description="Helical" evidence="1">
    <location>
        <begin position="31"/>
        <end position="51"/>
    </location>
</feature>
<feature type="transmembrane region" description="Helical" evidence="1">
    <location>
        <begin position="87"/>
        <end position="107"/>
    </location>
</feature>
<feature type="transmembrane region" description="Helical" evidence="1">
    <location>
        <begin position="111"/>
        <end position="131"/>
    </location>
</feature>
<feature type="transmembrane region" description="Helical" evidence="1">
    <location>
        <begin position="134"/>
        <end position="154"/>
    </location>
</feature>
<feature type="transmembrane region" description="Helical" evidence="1">
    <location>
        <begin position="167"/>
        <end position="187"/>
    </location>
</feature>
<feature type="transmembrane region" description="Helical" evidence="1">
    <location>
        <begin position="207"/>
        <end position="227"/>
    </location>
</feature>
<feature type="transmembrane region" description="Helical" evidence="1">
    <location>
        <begin position="242"/>
        <end position="262"/>
    </location>
</feature>
<feature type="transmembrane region" description="Helical" evidence="1">
    <location>
        <begin position="274"/>
        <end position="294"/>
    </location>
</feature>
<feature type="transmembrane region" description="Helical" evidence="1">
    <location>
        <begin position="305"/>
        <end position="325"/>
    </location>
</feature>
<feature type="transmembrane region" description="Helical" evidence="1">
    <location>
        <begin position="330"/>
        <end position="350"/>
    </location>
</feature>
<feature type="transmembrane region" description="Helical" evidence="1">
    <location>
        <begin position="358"/>
        <end position="378"/>
    </location>
</feature>
<feature type="transmembrane region" description="Helical" evidence="1">
    <location>
        <begin position="386"/>
        <end position="406"/>
    </location>
</feature>
<feature type="transmembrane region" description="Helical" evidence="1">
    <location>
        <begin position="416"/>
        <end position="436"/>
    </location>
</feature>
<feature type="transmembrane region" description="Helical" evidence="1">
    <location>
        <begin position="462"/>
        <end position="482"/>
    </location>
</feature>
<sequence length="500" mass="55916">MSDLPWLTIIVILPISAGSSIPLFPHRGNNIIRWYTLGICLLEFLLMTYTFRYHFHFDDPLIQLEEDYDWIDLIDLHWRLGIDGLSIGPISLTSFVTTLATLAAWPVTRNPRLFYFLMLAMYSGQVGLFASRDILLFFLMWELELIPVYLLISMWGGKRRLYSATKFILYTAGGSIFISMGASSMGLYGFDGPTLDFEILANKYYPVVLEIVFYLGFFIAHAIKLPILPLHTWLPDTHGEAHYSTCMLLAGIPLKMGGYGLIRINMELLPHAHSLFSPWLVIVGAVQIIYAALTSLSQRNLKRRIAYSSVSHMGFVIVGIGSMADTSLNGAILQMISHGLIGAALFFLAGTSYDGIRTLFLDGIGGMAIPMSKISTMFSSFSMASLALPGMSGFVAESMVLLGIITSRKYSLTFQIVIAAIMAIGMILTPIHLLSMLRRMFYGYKFLNVLNPYLKDSGPREIFISICLFLPVIGTGTYPDLVLSLWDKKVEAIMFRSFHE</sequence>
<organism>
    <name type="scientific">Cycas taitungensis</name>
    <name type="common">Prince sago</name>
    <name type="synonym">Cycas taiwaniana</name>
    <dbReference type="NCBI Taxonomy" id="54799"/>
    <lineage>
        <taxon>Eukaryota</taxon>
        <taxon>Viridiplantae</taxon>
        <taxon>Streptophyta</taxon>
        <taxon>Embryophyta</taxon>
        <taxon>Tracheophyta</taxon>
        <taxon>Spermatophyta</taxon>
        <taxon>Cycadidae</taxon>
        <taxon>Cycadales</taxon>
        <taxon>Cycadaceae</taxon>
        <taxon>Cycas</taxon>
    </lineage>
</organism>
<keyword id="KW-0150">Chloroplast</keyword>
<keyword id="KW-0472">Membrane</keyword>
<keyword id="KW-0520">NAD</keyword>
<keyword id="KW-0521">NADP</keyword>
<keyword id="KW-0934">Plastid</keyword>
<keyword id="KW-0618">Plastoquinone</keyword>
<keyword id="KW-0874">Quinone</keyword>
<keyword id="KW-0793">Thylakoid</keyword>
<keyword id="KW-1278">Translocase</keyword>
<keyword id="KW-0812">Transmembrane</keyword>
<keyword id="KW-1133">Transmembrane helix</keyword>
<gene>
    <name evidence="1" type="primary">ndhD</name>
</gene>
<reference key="1">
    <citation type="journal article" date="2007" name="Mol. Biol. Evol.">
        <title>Chloroplast genome (cpDNA) of Cycas taitungensis and 56 cp protein-coding genes of Gnetum parvifolium: insights into cpDNA evolution and phylogeny of extant seed plants.</title>
        <authorList>
            <person name="Wu C.-S."/>
            <person name="Wang Y.-N."/>
            <person name="Liu S.-M."/>
            <person name="Chaw S.-M."/>
        </authorList>
    </citation>
    <scope>NUCLEOTIDE SEQUENCE [LARGE SCALE GENOMIC DNA]</scope>
</reference>
<protein>
    <recommendedName>
        <fullName evidence="1">NAD(P)H-quinone oxidoreductase chain 4, chloroplastic</fullName>
        <ecNumber evidence="1">7.1.1.-</ecNumber>
    </recommendedName>
    <alternativeName>
        <fullName evidence="1">NAD(P)H dehydrogenase, chain 4</fullName>
    </alternativeName>
    <alternativeName>
        <fullName evidence="1">NADH-plastoquinone oxidoreductase chain 4</fullName>
    </alternativeName>
</protein>
<accession>A6H5P2</accession>
<geneLocation type="chloroplast"/>